<name>NU4C_COFAR</name>
<accession>A0A385</accession>
<evidence type="ECO:0000255" key="1">
    <source>
        <dbReference type="HAMAP-Rule" id="MF_00491"/>
    </source>
</evidence>
<organism>
    <name type="scientific">Coffea arabica</name>
    <name type="common">Arabian coffee</name>
    <dbReference type="NCBI Taxonomy" id="13443"/>
    <lineage>
        <taxon>Eukaryota</taxon>
        <taxon>Viridiplantae</taxon>
        <taxon>Streptophyta</taxon>
        <taxon>Embryophyta</taxon>
        <taxon>Tracheophyta</taxon>
        <taxon>Spermatophyta</taxon>
        <taxon>Magnoliopsida</taxon>
        <taxon>eudicotyledons</taxon>
        <taxon>Gunneridae</taxon>
        <taxon>Pentapetalae</taxon>
        <taxon>asterids</taxon>
        <taxon>lamiids</taxon>
        <taxon>Gentianales</taxon>
        <taxon>Rubiaceae</taxon>
        <taxon>Ixoroideae</taxon>
        <taxon>Gardenieae complex</taxon>
        <taxon>Bertiereae - Coffeeae clade</taxon>
        <taxon>Coffeeae</taxon>
        <taxon>Coffea</taxon>
    </lineage>
</organism>
<feature type="chain" id="PRO_0000275903" description="NAD(P)H-quinone oxidoreductase chain 4, chloroplastic">
    <location>
        <begin position="1"/>
        <end position="500"/>
    </location>
</feature>
<feature type="transmembrane region" description="Helical" evidence="1">
    <location>
        <begin position="4"/>
        <end position="24"/>
    </location>
</feature>
<feature type="transmembrane region" description="Helical" evidence="1">
    <location>
        <begin position="35"/>
        <end position="55"/>
    </location>
</feature>
<feature type="transmembrane region" description="Helical" evidence="1">
    <location>
        <begin position="87"/>
        <end position="107"/>
    </location>
</feature>
<feature type="transmembrane region" description="Helical" evidence="1">
    <location>
        <begin position="113"/>
        <end position="130"/>
    </location>
</feature>
<feature type="transmembrane region" description="Helical" evidence="1">
    <location>
        <begin position="134"/>
        <end position="154"/>
    </location>
</feature>
<feature type="transmembrane region" description="Helical" evidence="1">
    <location>
        <begin position="167"/>
        <end position="187"/>
    </location>
</feature>
<feature type="transmembrane region" description="Helical" evidence="1">
    <location>
        <begin position="211"/>
        <end position="231"/>
    </location>
</feature>
<feature type="transmembrane region" description="Helical" evidence="1">
    <location>
        <begin position="242"/>
        <end position="262"/>
    </location>
</feature>
<feature type="transmembrane region" description="Helical" evidence="1">
    <location>
        <begin position="272"/>
        <end position="292"/>
    </location>
</feature>
<feature type="transmembrane region" description="Helical" evidence="1">
    <location>
        <begin position="305"/>
        <end position="325"/>
    </location>
</feature>
<feature type="transmembrane region" description="Helical" evidence="1">
    <location>
        <begin position="330"/>
        <end position="350"/>
    </location>
</feature>
<feature type="transmembrane region" description="Helical" evidence="1">
    <location>
        <begin position="364"/>
        <end position="384"/>
    </location>
</feature>
<feature type="transmembrane region" description="Helical" evidence="1">
    <location>
        <begin position="386"/>
        <end position="406"/>
    </location>
</feature>
<feature type="transmembrane region" description="Helical" evidence="1">
    <location>
        <begin position="416"/>
        <end position="436"/>
    </location>
</feature>
<feature type="transmembrane region" description="Helical" evidence="1">
    <location>
        <begin position="463"/>
        <end position="483"/>
    </location>
</feature>
<reference key="1">
    <citation type="journal article" date="2007" name="Plant Biotechnol. J.">
        <title>The complete nucleotide sequence of the coffee (Coffea arabica L.) chloroplast genome: organization and implications for biotechnology and phylogenetic relationships amongst angiosperms.</title>
        <authorList>
            <person name="Samson N."/>
            <person name="Bausher M.G."/>
            <person name="Lee S.-B."/>
            <person name="Jansen R.K."/>
            <person name="Daniell H."/>
        </authorList>
    </citation>
    <scope>NUCLEOTIDE SEQUENCE [LARGE SCALE GENOMIC DNA]</scope>
</reference>
<geneLocation type="chloroplast"/>
<sequence length="500" mass="56431">MNYFPWLTIIVILPIFAGSLIFFLPHRGNRVIRWYTIFICIFELLLTAYTFCYHFQTDDPLIQLMEDYKWIQLFDFHWRLGIDGLSIGPILLTGFITTLATLAAWPVTRDSRLFNFLMLAMYSAQIGLFSSRDLLLFFIMWELELIPVYLLLSMWGGKKRLYSATKFILYTAGGSIFLLMGVLGIGLYGSNEPTLNFETSANQSYPLPLEIIFYIGFFIAFAVKLPIIPLHTWLPDTHGEAHYSTCMLLAGILLKMGAYGLVRINMELLSHAHSIFSPWLLIVGTIQIIYAASTSLGQRNLKKRIAYSSVSHMGFIIIGIGSITDTGLNGALLQIISHGFIGAALFFLAGTTYDRIRLVYLDEMGGIAILMPKIFTIFSTFSMASLALPGMSGFVAELIVFFGIITSQKYLLMPKILITFVMAIGMILTPIYSLSMSRQMFYGYKFFNIPNSYFFDSGPRELFLSISLFLPVLGIGMYPDFIFSLSVDKVEVILSNSFSK</sequence>
<proteinExistence type="inferred from homology"/>
<comment type="catalytic activity">
    <reaction evidence="1">
        <text>a plastoquinone + NADH + (n+1) H(+)(in) = a plastoquinol + NAD(+) + n H(+)(out)</text>
        <dbReference type="Rhea" id="RHEA:42608"/>
        <dbReference type="Rhea" id="RHEA-COMP:9561"/>
        <dbReference type="Rhea" id="RHEA-COMP:9562"/>
        <dbReference type="ChEBI" id="CHEBI:15378"/>
        <dbReference type="ChEBI" id="CHEBI:17757"/>
        <dbReference type="ChEBI" id="CHEBI:57540"/>
        <dbReference type="ChEBI" id="CHEBI:57945"/>
        <dbReference type="ChEBI" id="CHEBI:62192"/>
    </reaction>
</comment>
<comment type="catalytic activity">
    <reaction evidence="1">
        <text>a plastoquinone + NADPH + (n+1) H(+)(in) = a plastoquinol + NADP(+) + n H(+)(out)</text>
        <dbReference type="Rhea" id="RHEA:42612"/>
        <dbReference type="Rhea" id="RHEA-COMP:9561"/>
        <dbReference type="Rhea" id="RHEA-COMP:9562"/>
        <dbReference type="ChEBI" id="CHEBI:15378"/>
        <dbReference type="ChEBI" id="CHEBI:17757"/>
        <dbReference type="ChEBI" id="CHEBI:57783"/>
        <dbReference type="ChEBI" id="CHEBI:58349"/>
        <dbReference type="ChEBI" id="CHEBI:62192"/>
    </reaction>
</comment>
<comment type="subcellular location">
    <subcellularLocation>
        <location evidence="1">Plastid</location>
        <location evidence="1">Chloroplast thylakoid membrane</location>
        <topology evidence="1">Multi-pass membrane protein</topology>
    </subcellularLocation>
</comment>
<comment type="similarity">
    <text evidence="1">Belongs to the complex I subunit 4 family.</text>
</comment>
<dbReference type="EC" id="7.1.1.-" evidence="1"/>
<dbReference type="EMBL" id="EF044213">
    <property type="protein sequence ID" value="ABJ89729.1"/>
    <property type="molecule type" value="Genomic_DNA"/>
</dbReference>
<dbReference type="RefSeq" id="YP_817532.1">
    <property type="nucleotide sequence ID" value="NC_008535.1"/>
</dbReference>
<dbReference type="SMR" id="A0A385"/>
<dbReference type="GeneID" id="4421851"/>
<dbReference type="OrthoDB" id="564260at2759"/>
<dbReference type="Proteomes" id="UP000515148">
    <property type="component" value="Chloroplast Pltd"/>
</dbReference>
<dbReference type="GO" id="GO:0009535">
    <property type="term" value="C:chloroplast thylakoid membrane"/>
    <property type="evidence" value="ECO:0007669"/>
    <property type="project" value="UniProtKB-SubCell"/>
</dbReference>
<dbReference type="GO" id="GO:0008137">
    <property type="term" value="F:NADH dehydrogenase (ubiquinone) activity"/>
    <property type="evidence" value="ECO:0007669"/>
    <property type="project" value="InterPro"/>
</dbReference>
<dbReference type="GO" id="GO:0048039">
    <property type="term" value="F:ubiquinone binding"/>
    <property type="evidence" value="ECO:0007669"/>
    <property type="project" value="TreeGrafter"/>
</dbReference>
<dbReference type="GO" id="GO:0042773">
    <property type="term" value="P:ATP synthesis coupled electron transport"/>
    <property type="evidence" value="ECO:0007669"/>
    <property type="project" value="InterPro"/>
</dbReference>
<dbReference type="GO" id="GO:0015990">
    <property type="term" value="P:electron transport coupled proton transport"/>
    <property type="evidence" value="ECO:0007669"/>
    <property type="project" value="TreeGrafter"/>
</dbReference>
<dbReference type="HAMAP" id="MF_00491">
    <property type="entry name" value="NDH1_NuoM"/>
    <property type="match status" value="1"/>
</dbReference>
<dbReference type="InterPro" id="IPR022997">
    <property type="entry name" value="NADH_Q_OxRdtase_chain4"/>
</dbReference>
<dbReference type="InterPro" id="IPR010227">
    <property type="entry name" value="NADH_Q_OxRdtase_chainM/4"/>
</dbReference>
<dbReference type="InterPro" id="IPR003918">
    <property type="entry name" value="NADH_UbQ_OxRdtase"/>
</dbReference>
<dbReference type="InterPro" id="IPR001750">
    <property type="entry name" value="ND/Mrp_TM"/>
</dbReference>
<dbReference type="NCBIfam" id="TIGR01972">
    <property type="entry name" value="NDH_I_M"/>
    <property type="match status" value="1"/>
</dbReference>
<dbReference type="PANTHER" id="PTHR43507:SF21">
    <property type="entry name" value="NAD(P)H-QUINONE OXIDOREDUCTASE CHAIN 4, CHLOROPLASTIC"/>
    <property type="match status" value="1"/>
</dbReference>
<dbReference type="PANTHER" id="PTHR43507">
    <property type="entry name" value="NADH-UBIQUINONE OXIDOREDUCTASE CHAIN 4"/>
    <property type="match status" value="1"/>
</dbReference>
<dbReference type="Pfam" id="PF00361">
    <property type="entry name" value="Proton_antipo_M"/>
    <property type="match status" value="1"/>
</dbReference>
<dbReference type="PRINTS" id="PR01437">
    <property type="entry name" value="NUOXDRDTASE4"/>
</dbReference>
<gene>
    <name evidence="1" type="primary">ndhD</name>
</gene>
<keyword id="KW-0150">Chloroplast</keyword>
<keyword id="KW-0472">Membrane</keyword>
<keyword id="KW-0520">NAD</keyword>
<keyword id="KW-0521">NADP</keyword>
<keyword id="KW-0934">Plastid</keyword>
<keyword id="KW-0618">Plastoquinone</keyword>
<keyword id="KW-0874">Quinone</keyword>
<keyword id="KW-1185">Reference proteome</keyword>
<keyword id="KW-0793">Thylakoid</keyword>
<keyword id="KW-1278">Translocase</keyword>
<keyword id="KW-0812">Transmembrane</keyword>
<keyword id="KW-1133">Transmembrane helix</keyword>
<protein>
    <recommendedName>
        <fullName evidence="1">NAD(P)H-quinone oxidoreductase chain 4, chloroplastic</fullName>
        <ecNumber evidence="1">7.1.1.-</ecNumber>
    </recommendedName>
    <alternativeName>
        <fullName evidence="1">NAD(P)H dehydrogenase, chain 4</fullName>
    </alternativeName>
    <alternativeName>
        <fullName evidence="1">NADH-plastoquinone oxidoreductase chain 4</fullName>
    </alternativeName>
</protein>